<dbReference type="EC" id="7.1.1.-" evidence="1"/>
<dbReference type="EMBL" id="CP000539">
    <property type="protein sequence ID" value="ABM41197.1"/>
    <property type="molecule type" value="Genomic_DNA"/>
</dbReference>
<dbReference type="RefSeq" id="WP_011804398.1">
    <property type="nucleotide sequence ID" value="NZ_CP016278.1"/>
</dbReference>
<dbReference type="SMR" id="A1W4M2"/>
<dbReference type="STRING" id="232721.Ajs_0957"/>
<dbReference type="KEGG" id="ajs:Ajs_0957"/>
<dbReference type="eggNOG" id="COG0838">
    <property type="taxonomic scope" value="Bacteria"/>
</dbReference>
<dbReference type="HOGENOM" id="CLU_119549_3_1_4"/>
<dbReference type="Proteomes" id="UP000000645">
    <property type="component" value="Chromosome"/>
</dbReference>
<dbReference type="GO" id="GO:0030964">
    <property type="term" value="C:NADH dehydrogenase complex"/>
    <property type="evidence" value="ECO:0007669"/>
    <property type="project" value="TreeGrafter"/>
</dbReference>
<dbReference type="GO" id="GO:0005886">
    <property type="term" value="C:plasma membrane"/>
    <property type="evidence" value="ECO:0007669"/>
    <property type="project" value="UniProtKB-SubCell"/>
</dbReference>
<dbReference type="GO" id="GO:0008137">
    <property type="term" value="F:NADH dehydrogenase (ubiquinone) activity"/>
    <property type="evidence" value="ECO:0007669"/>
    <property type="project" value="InterPro"/>
</dbReference>
<dbReference type="GO" id="GO:0050136">
    <property type="term" value="F:NADH:ubiquinone reductase (non-electrogenic) activity"/>
    <property type="evidence" value="ECO:0007669"/>
    <property type="project" value="UniProtKB-UniRule"/>
</dbReference>
<dbReference type="GO" id="GO:0048038">
    <property type="term" value="F:quinone binding"/>
    <property type="evidence" value="ECO:0007669"/>
    <property type="project" value="UniProtKB-KW"/>
</dbReference>
<dbReference type="FunFam" id="1.20.58.1610:FF:000004">
    <property type="entry name" value="NADH-quinone oxidoreductase subunit A"/>
    <property type="match status" value="1"/>
</dbReference>
<dbReference type="Gene3D" id="1.20.58.1610">
    <property type="entry name" value="NADH:ubiquinone/plastoquinone oxidoreductase, chain 3"/>
    <property type="match status" value="1"/>
</dbReference>
<dbReference type="HAMAP" id="MF_01394">
    <property type="entry name" value="NDH1_NuoA"/>
    <property type="match status" value="1"/>
</dbReference>
<dbReference type="InterPro" id="IPR023043">
    <property type="entry name" value="NAD(P)H_OxRDtase_bac/plastid"/>
</dbReference>
<dbReference type="InterPro" id="IPR000440">
    <property type="entry name" value="NADH_UbQ/plastoQ_OxRdtase_su3"/>
</dbReference>
<dbReference type="InterPro" id="IPR038430">
    <property type="entry name" value="NDAH_ubi_oxred_su3_sf"/>
</dbReference>
<dbReference type="PANTHER" id="PTHR11058">
    <property type="entry name" value="NADH-UBIQUINONE OXIDOREDUCTASE CHAIN 3"/>
    <property type="match status" value="1"/>
</dbReference>
<dbReference type="PANTHER" id="PTHR11058:SF9">
    <property type="entry name" value="NADH-UBIQUINONE OXIDOREDUCTASE CHAIN 3"/>
    <property type="match status" value="1"/>
</dbReference>
<dbReference type="Pfam" id="PF00507">
    <property type="entry name" value="Oxidored_q4"/>
    <property type="match status" value="1"/>
</dbReference>
<protein>
    <recommendedName>
        <fullName evidence="1">NADH-quinone oxidoreductase subunit A</fullName>
        <ecNumber evidence="1">7.1.1.-</ecNumber>
    </recommendedName>
    <alternativeName>
        <fullName evidence="1">NADH dehydrogenase I subunit A</fullName>
    </alternativeName>
    <alternativeName>
        <fullName evidence="1">NDH-1 subunit A</fullName>
    </alternativeName>
    <alternativeName>
        <fullName evidence="1">NUO1</fullName>
    </alternativeName>
</protein>
<organism>
    <name type="scientific">Acidovorax sp. (strain JS42)</name>
    <dbReference type="NCBI Taxonomy" id="232721"/>
    <lineage>
        <taxon>Bacteria</taxon>
        <taxon>Pseudomonadati</taxon>
        <taxon>Pseudomonadota</taxon>
        <taxon>Betaproteobacteria</taxon>
        <taxon>Burkholderiales</taxon>
        <taxon>Comamonadaceae</taxon>
        <taxon>Acidovorax</taxon>
    </lineage>
</organism>
<evidence type="ECO:0000255" key="1">
    <source>
        <dbReference type="HAMAP-Rule" id="MF_01394"/>
    </source>
</evidence>
<proteinExistence type="inferred from homology"/>
<accession>A1W4M2</accession>
<comment type="function">
    <text evidence="1">NDH-1 shuttles electrons from NADH, via FMN and iron-sulfur (Fe-S) centers, to quinones in the respiratory chain. The immediate electron acceptor for the enzyme in this species is believed to be ubiquinone. Couples the redox reaction to proton translocation (for every two electrons transferred, four hydrogen ions are translocated across the cytoplasmic membrane), and thus conserves the redox energy in a proton gradient.</text>
</comment>
<comment type="catalytic activity">
    <reaction evidence="1">
        <text>a quinone + NADH + 5 H(+)(in) = a quinol + NAD(+) + 4 H(+)(out)</text>
        <dbReference type="Rhea" id="RHEA:57888"/>
        <dbReference type="ChEBI" id="CHEBI:15378"/>
        <dbReference type="ChEBI" id="CHEBI:24646"/>
        <dbReference type="ChEBI" id="CHEBI:57540"/>
        <dbReference type="ChEBI" id="CHEBI:57945"/>
        <dbReference type="ChEBI" id="CHEBI:132124"/>
    </reaction>
</comment>
<comment type="subunit">
    <text evidence="1">NDH-1 is composed of 14 different subunits. Subunits NuoA, H, J, K, L, M, N constitute the membrane sector of the complex.</text>
</comment>
<comment type="subcellular location">
    <subcellularLocation>
        <location evidence="1">Cell inner membrane</location>
        <topology evidence="1">Multi-pass membrane protein</topology>
    </subcellularLocation>
</comment>
<comment type="similarity">
    <text evidence="1">Belongs to the complex I subunit 3 family.</text>
</comment>
<keyword id="KW-0997">Cell inner membrane</keyword>
<keyword id="KW-1003">Cell membrane</keyword>
<keyword id="KW-0472">Membrane</keyword>
<keyword id="KW-0520">NAD</keyword>
<keyword id="KW-0874">Quinone</keyword>
<keyword id="KW-1278">Translocase</keyword>
<keyword id="KW-0812">Transmembrane</keyword>
<keyword id="KW-1133">Transmembrane helix</keyword>
<keyword id="KW-0813">Transport</keyword>
<keyword id="KW-0830">Ubiquinone</keyword>
<reference key="1">
    <citation type="submission" date="2006-12" db="EMBL/GenBank/DDBJ databases">
        <title>Complete sequence of chromosome 1 of Acidovorax sp. JS42.</title>
        <authorList>
            <person name="Copeland A."/>
            <person name="Lucas S."/>
            <person name="Lapidus A."/>
            <person name="Barry K."/>
            <person name="Detter J.C."/>
            <person name="Glavina del Rio T."/>
            <person name="Dalin E."/>
            <person name="Tice H."/>
            <person name="Pitluck S."/>
            <person name="Chertkov O."/>
            <person name="Brettin T."/>
            <person name="Bruce D."/>
            <person name="Han C."/>
            <person name="Tapia R."/>
            <person name="Gilna P."/>
            <person name="Schmutz J."/>
            <person name="Larimer F."/>
            <person name="Land M."/>
            <person name="Hauser L."/>
            <person name="Kyrpides N."/>
            <person name="Kim E."/>
            <person name="Stahl D."/>
            <person name="Richardson P."/>
        </authorList>
    </citation>
    <scope>NUCLEOTIDE SEQUENCE [LARGE SCALE GENOMIC DNA]</scope>
    <source>
        <strain>JS42</strain>
    </source>
</reference>
<name>NUOA_ACISJ</name>
<feature type="chain" id="PRO_0000362611" description="NADH-quinone oxidoreductase subunit A">
    <location>
        <begin position="1"/>
        <end position="119"/>
    </location>
</feature>
<feature type="transmembrane region" description="Helical" evidence="1">
    <location>
        <begin position="9"/>
        <end position="29"/>
    </location>
</feature>
<feature type="transmembrane region" description="Helical" evidence="1">
    <location>
        <begin position="63"/>
        <end position="83"/>
    </location>
</feature>
<feature type="transmembrane region" description="Helical" evidence="1">
    <location>
        <begin position="88"/>
        <end position="108"/>
    </location>
</feature>
<sequence length="119" mass="13379">MNLDQYLPVLLFILVGIGVGVVPLLLGYVLGPNRPDPAKNSPYECGFEAFEDARMKFDVRYYLVAILFILFDLEIAFLFPWAVTLQEVGVTGFVAVLVFLAILVVGFAYEWKKGALNWE</sequence>
<gene>
    <name evidence="1" type="primary">nuoA</name>
    <name type="ordered locus">Ajs_0957</name>
</gene>